<keyword id="KW-0963">Cytoplasm</keyword>
<keyword id="KW-0460">Magnesium</keyword>
<keyword id="KW-0479">Metal-binding</keyword>
<keyword id="KW-0566">Pantothenate biosynthesis</keyword>
<keyword id="KW-0808">Transferase</keyword>
<accession>Q14GL1</accession>
<name>PANB_FRAT1</name>
<dbReference type="EC" id="2.1.2.11" evidence="1"/>
<dbReference type="EMBL" id="AM286280">
    <property type="protein sequence ID" value="CAL09405.1"/>
    <property type="molecule type" value="Genomic_DNA"/>
</dbReference>
<dbReference type="RefSeq" id="WP_003029629.1">
    <property type="nucleotide sequence ID" value="NC_008245.1"/>
</dbReference>
<dbReference type="SMR" id="Q14GL1"/>
<dbReference type="KEGG" id="ftf:FTF1389"/>
<dbReference type="HOGENOM" id="CLU_036645_1_0_6"/>
<dbReference type="UniPathway" id="UPA00028">
    <property type="reaction ID" value="UER00003"/>
</dbReference>
<dbReference type="GO" id="GO:0005737">
    <property type="term" value="C:cytoplasm"/>
    <property type="evidence" value="ECO:0007669"/>
    <property type="project" value="UniProtKB-SubCell"/>
</dbReference>
<dbReference type="GO" id="GO:0003864">
    <property type="term" value="F:3-methyl-2-oxobutanoate hydroxymethyltransferase activity"/>
    <property type="evidence" value="ECO:0007669"/>
    <property type="project" value="UniProtKB-UniRule"/>
</dbReference>
<dbReference type="GO" id="GO:0000287">
    <property type="term" value="F:magnesium ion binding"/>
    <property type="evidence" value="ECO:0007669"/>
    <property type="project" value="TreeGrafter"/>
</dbReference>
<dbReference type="GO" id="GO:0015940">
    <property type="term" value="P:pantothenate biosynthetic process"/>
    <property type="evidence" value="ECO:0007669"/>
    <property type="project" value="UniProtKB-UniRule"/>
</dbReference>
<dbReference type="CDD" id="cd06557">
    <property type="entry name" value="KPHMT-like"/>
    <property type="match status" value="1"/>
</dbReference>
<dbReference type="FunFam" id="3.20.20.60:FF:000003">
    <property type="entry name" value="3-methyl-2-oxobutanoate hydroxymethyltransferase"/>
    <property type="match status" value="1"/>
</dbReference>
<dbReference type="Gene3D" id="3.20.20.60">
    <property type="entry name" value="Phosphoenolpyruvate-binding domains"/>
    <property type="match status" value="1"/>
</dbReference>
<dbReference type="HAMAP" id="MF_00156">
    <property type="entry name" value="PanB"/>
    <property type="match status" value="1"/>
</dbReference>
<dbReference type="InterPro" id="IPR003700">
    <property type="entry name" value="Pantoate_hydroxy_MeTrfase"/>
</dbReference>
<dbReference type="InterPro" id="IPR015813">
    <property type="entry name" value="Pyrv/PenolPyrv_kinase-like_dom"/>
</dbReference>
<dbReference type="InterPro" id="IPR040442">
    <property type="entry name" value="Pyrv_kinase-like_dom_sf"/>
</dbReference>
<dbReference type="NCBIfam" id="TIGR00222">
    <property type="entry name" value="panB"/>
    <property type="match status" value="1"/>
</dbReference>
<dbReference type="NCBIfam" id="NF001452">
    <property type="entry name" value="PRK00311.1"/>
    <property type="match status" value="1"/>
</dbReference>
<dbReference type="PANTHER" id="PTHR20881">
    <property type="entry name" value="3-METHYL-2-OXOBUTANOATE HYDROXYMETHYLTRANSFERASE"/>
    <property type="match status" value="1"/>
</dbReference>
<dbReference type="PANTHER" id="PTHR20881:SF0">
    <property type="entry name" value="3-METHYL-2-OXOBUTANOATE HYDROXYMETHYLTRANSFERASE"/>
    <property type="match status" value="1"/>
</dbReference>
<dbReference type="Pfam" id="PF02548">
    <property type="entry name" value="Pantoate_transf"/>
    <property type="match status" value="1"/>
</dbReference>
<dbReference type="PIRSF" id="PIRSF000388">
    <property type="entry name" value="Pantoate_hydroxy_MeTrfase"/>
    <property type="match status" value="1"/>
</dbReference>
<dbReference type="SUPFAM" id="SSF51621">
    <property type="entry name" value="Phosphoenolpyruvate/pyruvate domain"/>
    <property type="match status" value="1"/>
</dbReference>
<comment type="function">
    <text evidence="1">Catalyzes the reversible reaction in which hydroxymethyl group from 5,10-methylenetetrahydrofolate is transferred onto alpha-ketoisovalerate to form ketopantoate.</text>
</comment>
<comment type="catalytic activity">
    <reaction evidence="1">
        <text>3-methyl-2-oxobutanoate + (6R)-5,10-methylene-5,6,7,8-tetrahydrofolate + H2O = 2-dehydropantoate + (6S)-5,6,7,8-tetrahydrofolate</text>
        <dbReference type="Rhea" id="RHEA:11824"/>
        <dbReference type="ChEBI" id="CHEBI:11561"/>
        <dbReference type="ChEBI" id="CHEBI:11851"/>
        <dbReference type="ChEBI" id="CHEBI:15377"/>
        <dbReference type="ChEBI" id="CHEBI:15636"/>
        <dbReference type="ChEBI" id="CHEBI:57453"/>
        <dbReference type="EC" id="2.1.2.11"/>
    </reaction>
</comment>
<comment type="cofactor">
    <cofactor evidence="1">
        <name>Mg(2+)</name>
        <dbReference type="ChEBI" id="CHEBI:18420"/>
    </cofactor>
    <text evidence="1">Binds 1 Mg(2+) ion per subunit.</text>
</comment>
<comment type="pathway">
    <text evidence="1">Cofactor biosynthesis; (R)-pantothenate biosynthesis; (R)-pantoate from 3-methyl-2-oxobutanoate: step 1/2.</text>
</comment>
<comment type="subunit">
    <text evidence="1">Homodecamer; pentamer of dimers.</text>
</comment>
<comment type="subcellular location">
    <subcellularLocation>
        <location evidence="1">Cytoplasm</location>
    </subcellularLocation>
</comment>
<comment type="similarity">
    <text evidence="1">Belongs to the PanB family.</text>
</comment>
<organism>
    <name type="scientific">Francisella tularensis subsp. tularensis (strain FSC 198)</name>
    <dbReference type="NCBI Taxonomy" id="393115"/>
    <lineage>
        <taxon>Bacteria</taxon>
        <taxon>Pseudomonadati</taxon>
        <taxon>Pseudomonadota</taxon>
        <taxon>Gammaproteobacteria</taxon>
        <taxon>Thiotrichales</taxon>
        <taxon>Francisellaceae</taxon>
        <taxon>Francisella</taxon>
    </lineage>
</organism>
<gene>
    <name evidence="1" type="primary">panB</name>
    <name type="ordered locus">FTF1389</name>
</gene>
<protein>
    <recommendedName>
        <fullName evidence="1">3-methyl-2-oxobutanoate hydroxymethyltransferase</fullName>
        <ecNumber evidence="1">2.1.2.11</ecNumber>
    </recommendedName>
    <alternativeName>
        <fullName evidence="1">Ketopantoate hydroxymethyltransferase</fullName>
        <shortName evidence="1">KPHMT</shortName>
    </alternativeName>
</protein>
<reference key="1">
    <citation type="journal article" date="2007" name="PLoS ONE">
        <title>Genome sequencing shows that European isolates of Francisella tularensis subspecies tularensis are almost identical to US laboratory strain Schu S4.</title>
        <authorList>
            <person name="Chaudhuri R.R."/>
            <person name="Ren C.-P."/>
            <person name="Desmond L."/>
            <person name="Vincent G.A."/>
            <person name="Silman N.J."/>
            <person name="Brehm J.K."/>
            <person name="Elmore M.J."/>
            <person name="Hudson M.J."/>
            <person name="Forsman M."/>
            <person name="Isherwood K.E."/>
            <person name="Gurycova D."/>
            <person name="Minton N.P."/>
            <person name="Titball R.W."/>
            <person name="Pallen M.J."/>
            <person name="Vipond R."/>
        </authorList>
    </citation>
    <scope>NUCLEOTIDE SEQUENCE [LARGE SCALE GENOMIC DNA]</scope>
    <source>
        <strain>FSC 198</strain>
    </source>
</reference>
<proteinExistence type="inferred from homology"/>
<evidence type="ECO:0000255" key="1">
    <source>
        <dbReference type="HAMAP-Rule" id="MF_00156"/>
    </source>
</evidence>
<feature type="chain" id="PRO_0000297270" description="3-methyl-2-oxobutanoate hydroxymethyltransferase">
    <location>
        <begin position="1"/>
        <end position="264"/>
    </location>
</feature>
<feature type="active site" description="Proton acceptor" evidence="1">
    <location>
        <position position="179"/>
    </location>
</feature>
<feature type="binding site" evidence="1">
    <location>
        <begin position="42"/>
        <end position="43"/>
    </location>
    <ligand>
        <name>3-methyl-2-oxobutanoate</name>
        <dbReference type="ChEBI" id="CHEBI:11851"/>
    </ligand>
</feature>
<feature type="binding site" evidence="1">
    <location>
        <position position="42"/>
    </location>
    <ligand>
        <name>Mg(2+)</name>
        <dbReference type="ChEBI" id="CHEBI:18420"/>
    </ligand>
</feature>
<feature type="binding site" evidence="1">
    <location>
        <position position="81"/>
    </location>
    <ligand>
        <name>3-methyl-2-oxobutanoate</name>
        <dbReference type="ChEBI" id="CHEBI:11851"/>
    </ligand>
</feature>
<feature type="binding site" evidence="1">
    <location>
        <position position="81"/>
    </location>
    <ligand>
        <name>Mg(2+)</name>
        <dbReference type="ChEBI" id="CHEBI:18420"/>
    </ligand>
</feature>
<feature type="binding site" evidence="1">
    <location>
        <position position="110"/>
    </location>
    <ligand>
        <name>3-methyl-2-oxobutanoate</name>
        <dbReference type="ChEBI" id="CHEBI:11851"/>
    </ligand>
</feature>
<feature type="binding site" evidence="1">
    <location>
        <position position="112"/>
    </location>
    <ligand>
        <name>Mg(2+)</name>
        <dbReference type="ChEBI" id="CHEBI:18420"/>
    </ligand>
</feature>
<sequence>MKSVLGFKKAKVTEKISMVTCYDYTLAKIINSTDIDCILVGDSGGMVLLGKKNTTYTTLDDMQFMTQAVANGATDKFIVADLPFMSYRQSLETTMQAVMALIQSGAHAIKLEGSSGNLDIIKHIVDSGVPVMGHIGMTPQFINSFGGFKVQGRTEEAAKHLLEEAKLLEQAGCFGIVLECIPANIAKDITQNLDIPTIGIGAGSNTDGQILVLQDMLGMNTDFQPKFVKKYIDGSKLFSDAINTYVKETKANTFPTKEHCYDYC</sequence>